<sequence>MVSDRRLLKKFGKIADRIIALEPQMRQLKDEDFLLKTQEFKQMLENGKSLDDILIEVYAVAREAARRVLGLNAYKVQLIGGIILNSGDIAEMRTGEGKTLTGIFPAYLNALTQKGVHIVTVNEYLSRRDSEINGKVFDLLGISVGLNGSSLSKAEKREAYSKDITYTTNAELGFDYLRDNMVSDYSLKVQRKLNYCIIDEADSVLIDEARTPLIISGGTSTRINLYKAANNFALSLKEHDDLDIDLESKQVYLNEQGMKKANEFFSLKNLFAIENTEIFHLIMNALKAQFAFKEGVEYTVRDNEILLIDQFTGRIMHGRSYSDGLQQALQAKENVDIEEETVTLATITYQNFYRLYSKIAGMTGTAKTEEEEFIKIYNTRVIQTPTNKPVIRKDEPDLTFGSKNAALKKLVEDVKETHQKGAPILIGTTSVESSEQIARYLKKANLKFETINAKNHDREAEIVAKAGEIGAITLATNMAGRGTDIKLAKGVSELGGLRVFGVERNEARRIDNQLRGRSGRQGDPGLSRFYISMDDDLMMRFTAPKTRQRFKALGDDYIKSKMFTRAVTNAQKKLEGMNFDQRKNVLDYDNILAQQREIIYAQRDDILEANDLSIVIEKMQITAAYELIEKHSTLVHGEKTINKKELLEVIDGVLVPKNKFRIDDFNNKEKMDLAVEIAEAMMQLYKARISDIPEDVVIGMERKIILDAFDKYWTKHLDIAGKLKSGIYLQQYAQNNPLAIYVEQATDLFNKMKINIANDVVENLSNVILKVVEDEEKREERIEVTDKDIEEILLETGLETSDINNKAINKRFDELEEKFKDDKQKLKRLRIQRDVMLGLVLELERRAEMIVSPENDQLAITQLIKELQNDIDIASITVEQIHQNFNNMVEKINDPEKLKHLVIAKDVLLQLVARMDDIKEQEKQTKKKKKKKPHDDETTKVKIG</sequence>
<feature type="chain" id="PRO_0000320852" description="Protein translocase subunit SecA">
    <location>
        <begin position="1"/>
        <end position="944"/>
    </location>
</feature>
<feature type="region of interest" description="Disordered" evidence="2">
    <location>
        <begin position="920"/>
        <end position="944"/>
    </location>
</feature>
<feature type="compositionally biased region" description="Basic and acidic residues" evidence="2">
    <location>
        <begin position="933"/>
        <end position="944"/>
    </location>
</feature>
<feature type="binding site" evidence="1">
    <location>
        <position position="77"/>
    </location>
    <ligand>
        <name>ATP</name>
        <dbReference type="ChEBI" id="CHEBI:30616"/>
    </ligand>
</feature>
<feature type="binding site" evidence="1">
    <location>
        <begin position="95"/>
        <end position="99"/>
    </location>
    <ligand>
        <name>ATP</name>
        <dbReference type="ChEBI" id="CHEBI:30616"/>
    </ligand>
</feature>
<feature type="binding site" evidence="1">
    <location>
        <position position="484"/>
    </location>
    <ligand>
        <name>ATP</name>
        <dbReference type="ChEBI" id="CHEBI:30616"/>
    </ligand>
</feature>
<evidence type="ECO:0000255" key="1">
    <source>
        <dbReference type="HAMAP-Rule" id="MF_01382"/>
    </source>
</evidence>
<evidence type="ECO:0000256" key="2">
    <source>
        <dbReference type="SAM" id="MobiDB-lite"/>
    </source>
</evidence>
<comment type="function">
    <text evidence="1">Part of the Sec protein translocase complex. Interacts with the SecYEG preprotein conducting channel. Has a central role in coupling the hydrolysis of ATP to the transfer of proteins into and across the cell membrane, serving as an ATP-driven molecular motor driving the stepwise translocation of polypeptide chains across the membrane.</text>
</comment>
<comment type="catalytic activity">
    <reaction evidence="1">
        <text>ATP + H2O + cellular proteinSide 1 = ADP + phosphate + cellular proteinSide 2.</text>
        <dbReference type="EC" id="7.4.2.8"/>
    </reaction>
</comment>
<comment type="subunit">
    <text evidence="1">Monomer and homodimer. Part of the essential Sec protein translocation apparatus which comprises SecA, SecYEG and auxiliary proteins SecDF. Other proteins may also be involved.</text>
</comment>
<comment type="subcellular location">
    <subcellularLocation>
        <location evidence="1">Cell membrane</location>
        <topology evidence="1">Peripheral membrane protein</topology>
        <orientation evidence="1">Cytoplasmic side</orientation>
    </subcellularLocation>
    <subcellularLocation>
        <location evidence="1">Cytoplasm</location>
    </subcellularLocation>
    <text evidence="1">Distribution is 50-50.</text>
</comment>
<comment type="similarity">
    <text evidence="1">Belongs to the SecA family.</text>
</comment>
<dbReference type="EC" id="7.4.2.8" evidence="1"/>
<dbReference type="EMBL" id="CP000123">
    <property type="protein sequence ID" value="ABC01329.1"/>
    <property type="molecule type" value="Genomic_DNA"/>
</dbReference>
<dbReference type="RefSeq" id="WP_011386947.1">
    <property type="nucleotide sequence ID" value="NC_007633.1"/>
</dbReference>
<dbReference type="SMR" id="Q2ST71"/>
<dbReference type="TCDB" id="3.A.5.3.1">
    <property type="family name" value="the general secretory pathway (sec) family"/>
</dbReference>
<dbReference type="GeneID" id="23779000"/>
<dbReference type="KEGG" id="mcp:MCAP_0045"/>
<dbReference type="HOGENOM" id="CLU_005314_3_0_14"/>
<dbReference type="PhylomeDB" id="Q2ST71"/>
<dbReference type="Proteomes" id="UP000001928">
    <property type="component" value="Chromosome"/>
</dbReference>
<dbReference type="GO" id="GO:0031522">
    <property type="term" value="C:cell envelope Sec protein transport complex"/>
    <property type="evidence" value="ECO:0007669"/>
    <property type="project" value="TreeGrafter"/>
</dbReference>
<dbReference type="GO" id="GO:0005829">
    <property type="term" value="C:cytosol"/>
    <property type="evidence" value="ECO:0007669"/>
    <property type="project" value="TreeGrafter"/>
</dbReference>
<dbReference type="GO" id="GO:0005886">
    <property type="term" value="C:plasma membrane"/>
    <property type="evidence" value="ECO:0007669"/>
    <property type="project" value="UniProtKB-SubCell"/>
</dbReference>
<dbReference type="GO" id="GO:0005524">
    <property type="term" value="F:ATP binding"/>
    <property type="evidence" value="ECO:0007669"/>
    <property type="project" value="UniProtKB-UniRule"/>
</dbReference>
<dbReference type="GO" id="GO:0008564">
    <property type="term" value="F:protein-exporting ATPase activity"/>
    <property type="evidence" value="ECO:0007669"/>
    <property type="project" value="UniProtKB-EC"/>
</dbReference>
<dbReference type="GO" id="GO:0065002">
    <property type="term" value="P:intracellular protein transmembrane transport"/>
    <property type="evidence" value="ECO:0007669"/>
    <property type="project" value="UniProtKB-UniRule"/>
</dbReference>
<dbReference type="GO" id="GO:0017038">
    <property type="term" value="P:protein import"/>
    <property type="evidence" value="ECO:0007669"/>
    <property type="project" value="InterPro"/>
</dbReference>
<dbReference type="GO" id="GO:0006605">
    <property type="term" value="P:protein targeting"/>
    <property type="evidence" value="ECO:0007669"/>
    <property type="project" value="UniProtKB-UniRule"/>
</dbReference>
<dbReference type="GO" id="GO:0043952">
    <property type="term" value="P:protein transport by the Sec complex"/>
    <property type="evidence" value="ECO:0007669"/>
    <property type="project" value="TreeGrafter"/>
</dbReference>
<dbReference type="CDD" id="cd17928">
    <property type="entry name" value="DEXDc_SecA"/>
    <property type="match status" value="1"/>
</dbReference>
<dbReference type="CDD" id="cd18803">
    <property type="entry name" value="SF2_C_secA"/>
    <property type="match status" value="1"/>
</dbReference>
<dbReference type="FunFam" id="3.40.50.300:FF:000429">
    <property type="entry name" value="Preprotein translocase subunit SecA"/>
    <property type="match status" value="1"/>
</dbReference>
<dbReference type="Gene3D" id="1.10.3060.10">
    <property type="entry name" value="Helical scaffold and wing domains of SecA"/>
    <property type="match status" value="1"/>
</dbReference>
<dbReference type="Gene3D" id="3.40.50.300">
    <property type="entry name" value="P-loop containing nucleotide triphosphate hydrolases"/>
    <property type="match status" value="2"/>
</dbReference>
<dbReference type="Gene3D" id="3.90.1440.10">
    <property type="entry name" value="SecA, preprotein cross-linking domain"/>
    <property type="match status" value="1"/>
</dbReference>
<dbReference type="HAMAP" id="MF_01382">
    <property type="entry name" value="SecA"/>
    <property type="match status" value="1"/>
</dbReference>
<dbReference type="InterPro" id="IPR014001">
    <property type="entry name" value="Helicase_ATP-bd"/>
</dbReference>
<dbReference type="InterPro" id="IPR001650">
    <property type="entry name" value="Helicase_C-like"/>
</dbReference>
<dbReference type="InterPro" id="IPR027417">
    <property type="entry name" value="P-loop_NTPase"/>
</dbReference>
<dbReference type="InterPro" id="IPR000185">
    <property type="entry name" value="SecA"/>
</dbReference>
<dbReference type="InterPro" id="IPR011115">
    <property type="entry name" value="SecA_DEAD"/>
</dbReference>
<dbReference type="InterPro" id="IPR014018">
    <property type="entry name" value="SecA_motor_DEAD"/>
</dbReference>
<dbReference type="InterPro" id="IPR011130">
    <property type="entry name" value="SecA_preprotein_X-link_dom"/>
</dbReference>
<dbReference type="InterPro" id="IPR044722">
    <property type="entry name" value="SecA_SF2_C"/>
</dbReference>
<dbReference type="InterPro" id="IPR011116">
    <property type="entry name" value="SecA_Wing/Scaffold"/>
</dbReference>
<dbReference type="InterPro" id="IPR036266">
    <property type="entry name" value="SecA_Wing/Scaffold_sf"/>
</dbReference>
<dbReference type="InterPro" id="IPR036670">
    <property type="entry name" value="SecA_X-link_sf"/>
</dbReference>
<dbReference type="NCBIfam" id="NF006630">
    <property type="entry name" value="PRK09200.1"/>
    <property type="match status" value="1"/>
</dbReference>
<dbReference type="NCBIfam" id="TIGR00963">
    <property type="entry name" value="secA"/>
    <property type="match status" value="1"/>
</dbReference>
<dbReference type="PANTHER" id="PTHR30612:SF0">
    <property type="entry name" value="CHLOROPLAST PROTEIN-TRANSPORTING ATPASE"/>
    <property type="match status" value="1"/>
</dbReference>
<dbReference type="PANTHER" id="PTHR30612">
    <property type="entry name" value="SECA INNER MEMBRANE COMPONENT OF SEC PROTEIN SECRETION SYSTEM"/>
    <property type="match status" value="1"/>
</dbReference>
<dbReference type="Pfam" id="PF21090">
    <property type="entry name" value="P-loop_SecA"/>
    <property type="match status" value="2"/>
</dbReference>
<dbReference type="Pfam" id="PF07517">
    <property type="entry name" value="SecA_DEAD"/>
    <property type="match status" value="1"/>
</dbReference>
<dbReference type="Pfam" id="PF01043">
    <property type="entry name" value="SecA_PP_bind"/>
    <property type="match status" value="1"/>
</dbReference>
<dbReference type="Pfam" id="PF07516">
    <property type="entry name" value="SecA_SW"/>
    <property type="match status" value="1"/>
</dbReference>
<dbReference type="PRINTS" id="PR00906">
    <property type="entry name" value="SECA"/>
</dbReference>
<dbReference type="SMART" id="SM00957">
    <property type="entry name" value="SecA_DEAD"/>
    <property type="match status" value="1"/>
</dbReference>
<dbReference type="SMART" id="SM00958">
    <property type="entry name" value="SecA_PP_bind"/>
    <property type="match status" value="1"/>
</dbReference>
<dbReference type="SUPFAM" id="SSF81886">
    <property type="entry name" value="Helical scaffold and wing domains of SecA"/>
    <property type="match status" value="1"/>
</dbReference>
<dbReference type="SUPFAM" id="SSF52540">
    <property type="entry name" value="P-loop containing nucleoside triphosphate hydrolases"/>
    <property type="match status" value="2"/>
</dbReference>
<dbReference type="SUPFAM" id="SSF81767">
    <property type="entry name" value="Pre-protein crosslinking domain of SecA"/>
    <property type="match status" value="1"/>
</dbReference>
<dbReference type="PROSITE" id="PS51196">
    <property type="entry name" value="SECA_MOTOR_DEAD"/>
    <property type="match status" value="1"/>
</dbReference>
<gene>
    <name evidence="1" type="primary">secA</name>
    <name type="ordered locus">MCAP_0045</name>
</gene>
<keyword id="KW-0067">ATP-binding</keyword>
<keyword id="KW-1003">Cell membrane</keyword>
<keyword id="KW-0963">Cytoplasm</keyword>
<keyword id="KW-0472">Membrane</keyword>
<keyword id="KW-0547">Nucleotide-binding</keyword>
<keyword id="KW-0653">Protein transport</keyword>
<keyword id="KW-1278">Translocase</keyword>
<keyword id="KW-0811">Translocation</keyword>
<keyword id="KW-0813">Transport</keyword>
<organism>
    <name type="scientific">Mycoplasma capricolum subsp. capricolum (strain California kid / ATCC 27343 / NCTC 10154)</name>
    <dbReference type="NCBI Taxonomy" id="340047"/>
    <lineage>
        <taxon>Bacteria</taxon>
        <taxon>Bacillati</taxon>
        <taxon>Mycoplasmatota</taxon>
        <taxon>Mollicutes</taxon>
        <taxon>Mycoplasmataceae</taxon>
        <taxon>Mycoplasma</taxon>
    </lineage>
</organism>
<reference key="1">
    <citation type="submission" date="2005-09" db="EMBL/GenBank/DDBJ databases">
        <authorList>
            <person name="Glass J.I."/>
            <person name="Lartigue C."/>
            <person name="Pfannkoch C."/>
            <person name="Baden-Tillson H."/>
            <person name="Smith H.O."/>
            <person name="Venter J.C."/>
            <person name="Roske K."/>
            <person name="Wise K.S."/>
            <person name="Calcutt M.J."/>
            <person name="Nelson W.C."/>
            <person name="Nierman W.C."/>
        </authorList>
    </citation>
    <scope>NUCLEOTIDE SEQUENCE [LARGE SCALE GENOMIC DNA]</scope>
    <source>
        <strain>California kid / ATCC 27343 / NCTC 10154</strain>
    </source>
</reference>
<proteinExistence type="inferred from homology"/>
<accession>Q2ST71</accession>
<name>SECA_MYCCT</name>
<protein>
    <recommendedName>
        <fullName evidence="1">Protein translocase subunit SecA</fullName>
        <ecNumber evidence="1">7.4.2.8</ecNumber>
    </recommendedName>
</protein>